<name>Y043_OSHVF</name>
<proteinExistence type="predicted"/>
<organismHost>
    <name type="scientific">Magallana gigas</name>
    <name type="common">Pacific oyster</name>
    <name type="synonym">Crassostrea gigas</name>
    <dbReference type="NCBI Taxonomy" id="29159"/>
</organismHost>
<organismHost>
    <name type="scientific">Pecten maximus</name>
    <name type="common">King scallop</name>
    <name type="synonym">Pilgrim's clam</name>
    <dbReference type="NCBI Taxonomy" id="6579"/>
</organismHost>
<accession>Q6R7I1</accession>
<feature type="chain" id="PRO_0000385071" description="Uncharacterized protein ORF43">
    <location>
        <begin position="1"/>
        <end position="203"/>
    </location>
</feature>
<protein>
    <recommendedName>
        <fullName>Uncharacterized protein ORF43</fullName>
    </recommendedName>
</protein>
<dbReference type="EMBL" id="AY509253">
    <property type="protein sequence ID" value="AAS00935.1"/>
    <property type="molecule type" value="Genomic_DNA"/>
</dbReference>
<dbReference type="RefSeq" id="YP_024587.1">
    <property type="nucleotide sequence ID" value="NC_005881.2"/>
</dbReference>
<dbReference type="KEGG" id="vg:2948189"/>
<dbReference type="Proteomes" id="UP000007021">
    <property type="component" value="Segment"/>
</dbReference>
<keyword id="KW-1185">Reference proteome</keyword>
<organism>
    <name type="scientific">Ostreid herpesvirus 1 (isolate France)</name>
    <name type="common">OsHV-1</name>
    <name type="synonym">Pacific oyster herpesvirus</name>
    <dbReference type="NCBI Taxonomy" id="654903"/>
    <lineage>
        <taxon>Viruses</taxon>
        <taxon>Duplodnaviria</taxon>
        <taxon>Heunggongvirae</taxon>
        <taxon>Peploviricota</taxon>
        <taxon>Herviviricetes</taxon>
        <taxon>Herpesvirales</taxon>
        <taxon>Malacoherpesviridae</taxon>
        <taxon>Ostreavirus</taxon>
        <taxon>Ostreavirus ostreidmalaco1</taxon>
        <taxon>Ostreid herpesvirus 1</taxon>
    </lineage>
</organism>
<reference key="1">
    <citation type="journal article" date="2005" name="J. Gen. Virol.">
        <title>A novel class of herpesvirus with bivalve hosts.</title>
        <authorList>
            <person name="Davison A.J."/>
            <person name="Trus B.L."/>
            <person name="Cheng N."/>
            <person name="Steven A.C."/>
            <person name="Watson M.S."/>
            <person name="Cunningham C."/>
            <person name="Le Deuff R.M."/>
            <person name="Renault T."/>
        </authorList>
    </citation>
    <scope>NUCLEOTIDE SEQUENCE [LARGE SCALE GENOMIC DNA]</scope>
</reference>
<gene>
    <name type="ORF">ORF43</name>
</gene>
<sequence>MSNLFIPRSTKRAVYDGPLPMVGSSLPPIEINSKGDKSVVYLRGDDQPIDVNREHRMVKVTYNEYDEQETIKVIFLDKKATIKDLHNLMSVGRDLTTGVCNIEVQPEYGFTLRIPDPDKLKYKSDIDAVYRLFASKYDNSDLFERASESLAFQITLDMNRERKDPKVLGITGDARGWETAPDLIGDYMDVVTNNYMSRYMKGV</sequence>